<sequence length="1453" mass="162521">MEDDCEELQVPVGTLTSIGFSISNNNDRDKMSVLEVEAPNQVTDSRLGLPNPDSVCRTCGSKDRKVCEGHFGVINFAYSIINPYFLKEVAALLNKICPGCKYIRKKQFQITEDQPERCRYCTLNTGYPLMKFRVTTKEVFRRSGIVVEVNEESLMKLKKRGVLTLPPDYWSFLPQDSNIDESCLKPTRRIITHAQVYALLLGIDQRLIKKDIPMFNSLGLTSFPVTPNGYRVTEIVHQFNGARLIFDERTRIYKKLVGFEGNTLELSSRVMECMQYSRLFSETVSSSKDSANPYQKKSDTPKLCGLRFMKDVLLGKRSDHTFRTVVVGDPSLKLNEIGIPESIAKRLQVSEHLNQCNKERLVTSFVPTLLDNKEMHVRRGDRLVAIQVNDLQTGDKIFRSLMDGDTVLMNRPPSIHQHSLIAMTVRILPTTSVVSLNPICCLPFRGDFDGDCLHGYVPQSIQAKVELDELVALDKQLINRQNGRNLLSLGQDSLTAAYLVNVEKNCYLNRAQMQQLQMYCPFQLPPPAIIKASPSSTEPQWTGMQLFGMLFPPGFDYTYPLNNVVVSNGELLSFSEGSAWLRDGEGNFIERLLKHDKGKVLDIIYSAQEMLSQWLLMRGLSVSLADLYLSSDLQSRKNLTEEISYGLREAEQVCNKQQLMVESWRDFLAVNGEDKEEDSVSDLARFCYERQKSATLSELAVSAFKDAYRDVQALAYRYGDQSNSFLIMSKAGSKGNIGKLVQHSMCIGLQNSAVSLSFGFPRELTCAAWNDPNSPLRGAKGKDSTTTESYVPYGVIENSFLTGLNPLESFVHSVTSRDSSFSGNADLPGTLSRRLMFFMRDIYAAYDGTVRNSFGNQLVQFTYETDGPVEDITGEALGSLSACALSEAAYSALDQPISLLETSPLLNLKNVLECGSKKGQREQTMSLYLSEYLSKKKHGFEYGSLEIKNHLEKLSFSEIVSTSMIIFSPSSNTKVPLSPWVCHFHISEKVLKRKQLSAESVVSSLNEQYKSRNRELKLDIVDLDIQNTNHCSSDDQAMKDDNVCITVTVVEASKHSVLELDAIRLVLIPFLLDSPVKGDQGIKKVNILWTDRPKAPKRNGNHLAGELYLKVTMYGDRGKRNCWTALLETCLPIMDMIDWGRSHPDNIRQCCSVYGIDAGRSIFVANLESAVSDTGKEILREHLLLVADSLSVTGEFVALNAKGWSKQRQVESTPAPFTQACFSSPSQCFLKAAKEGVRDDLQGSIDALAWGKVPGFGTGDQFEIIISPKVHGFTTPVDVYDLLSSTKTMRRTNSAPKSDKATVQPFGLLHSAFLKDIKVLDGKGIPMSLLRTIFTWKNIELLSQSLKRILHSYEINELLNERDEGLVKMVLQLHPNSVEKIGPGVKGIRVAKSKHGDSCCFEVVRIDGTFEDFSYHKCVLGATKIIAPKKMNFYKSKYLKNGTLESGGFSENP</sequence>
<organism>
    <name type="scientific">Arabidopsis thaliana</name>
    <name type="common">Mouse-ear cress</name>
    <dbReference type="NCBI Taxonomy" id="3702"/>
    <lineage>
        <taxon>Eukaryota</taxon>
        <taxon>Viridiplantae</taxon>
        <taxon>Streptophyta</taxon>
        <taxon>Embryophyta</taxon>
        <taxon>Tracheophyta</taxon>
        <taxon>Spermatophyta</taxon>
        <taxon>Magnoliopsida</taxon>
        <taxon>eudicotyledons</taxon>
        <taxon>Gunneridae</taxon>
        <taxon>Pentapetalae</taxon>
        <taxon>rosids</taxon>
        <taxon>malvids</taxon>
        <taxon>Brassicales</taxon>
        <taxon>Brassicaceae</taxon>
        <taxon>Camelineae</taxon>
        <taxon>Arabidopsis</taxon>
    </lineage>
</organism>
<proteinExistence type="evidence at protein level"/>
<gene>
    <name type="primary">NRPD1</name>
    <name type="synonym">NRPD1a</name>
    <name type="synonym">RMD3</name>
    <name type="synonym">RPD1</name>
    <name type="synonym">SDE4</name>
    <name type="synonym">SMD2</name>
    <name type="ordered locus">At1g63020</name>
    <name type="ORF">F16M19.19</name>
    <name type="ORF">F16P17.19</name>
</gene>
<evidence type="ECO:0000250" key="1"/>
<evidence type="ECO:0000250" key="2">
    <source>
        <dbReference type="UniProtKB" id="P04050"/>
    </source>
</evidence>
<evidence type="ECO:0000269" key="3">
    <source>
    </source>
</evidence>
<evidence type="ECO:0000269" key="4">
    <source>
    </source>
</evidence>
<evidence type="ECO:0000269" key="5">
    <source>
    </source>
</evidence>
<evidence type="ECO:0000269" key="6">
    <source>
    </source>
</evidence>
<evidence type="ECO:0000269" key="7">
    <source>
    </source>
</evidence>
<evidence type="ECO:0000269" key="8">
    <source>
    </source>
</evidence>
<evidence type="ECO:0000269" key="9">
    <source>
    </source>
</evidence>
<evidence type="ECO:0000269" key="10">
    <source>
    </source>
</evidence>
<evidence type="ECO:0000269" key="11">
    <source>
    </source>
</evidence>
<evidence type="ECO:0000269" key="12">
    <source>
    </source>
</evidence>
<evidence type="ECO:0000269" key="13">
    <source>
    </source>
</evidence>
<evidence type="ECO:0000269" key="14">
    <source>
    </source>
</evidence>
<evidence type="ECO:0000269" key="15">
    <source>
    </source>
</evidence>
<evidence type="ECO:0000269" key="16">
    <source>
    </source>
</evidence>
<evidence type="ECO:0000269" key="17">
    <source>
    </source>
</evidence>
<evidence type="ECO:0000269" key="18">
    <source>
    </source>
</evidence>
<evidence type="ECO:0000269" key="19">
    <source>
    </source>
</evidence>
<evidence type="ECO:0000269" key="20">
    <source>
    </source>
</evidence>
<evidence type="ECO:0000269" key="21">
    <source>
    </source>
</evidence>
<evidence type="ECO:0000269" key="22">
    <source>
    </source>
</evidence>
<evidence type="ECO:0000269" key="23">
    <source>
    </source>
</evidence>
<evidence type="ECO:0000305" key="24"/>
<evidence type="ECO:0007829" key="25">
    <source>
        <dbReference type="PDB" id="7EU0"/>
    </source>
</evidence>
<evidence type="ECO:0007829" key="26">
    <source>
        <dbReference type="PDB" id="8XMD"/>
    </source>
</evidence>
<dbReference type="EC" id="2.7.7.6"/>
<dbReference type="EMBL" id="AY826515">
    <property type="protein sequence ID" value="AAX12372.1"/>
    <property type="molecule type" value="mRNA"/>
</dbReference>
<dbReference type="EMBL" id="DQ020657">
    <property type="protein sequence ID" value="AAY89363.1"/>
    <property type="molecule type" value="mRNA"/>
</dbReference>
<dbReference type="EMBL" id="AC010795">
    <property type="protein sequence ID" value="AAG51604.1"/>
    <property type="molecule type" value="Genomic_DNA"/>
</dbReference>
<dbReference type="EMBL" id="AC011000">
    <property type="protein sequence ID" value="AAF75815.1"/>
    <property type="molecule type" value="Genomic_DNA"/>
</dbReference>
<dbReference type="EMBL" id="CP002684">
    <property type="protein sequence ID" value="AEE34041.1"/>
    <property type="molecule type" value="Genomic_DNA"/>
</dbReference>
<dbReference type="EMBL" id="CP002684">
    <property type="protein sequence ID" value="AEE34042.1"/>
    <property type="molecule type" value="Genomic_DNA"/>
</dbReference>
<dbReference type="PIR" id="D96655">
    <property type="entry name" value="D96655"/>
</dbReference>
<dbReference type="RefSeq" id="NP_001185298.1">
    <property type="nucleotide sequence ID" value="NM_001198369.1"/>
</dbReference>
<dbReference type="RefSeq" id="NP_176490.2">
    <property type="nucleotide sequence ID" value="NM_104980.4"/>
</dbReference>
<dbReference type="PDB" id="7EU0">
    <property type="method" value="EM"/>
    <property type="resolution" value="3.16 A"/>
    <property type="chains" value="A=1-1453"/>
</dbReference>
<dbReference type="PDB" id="7EU1">
    <property type="method" value="EM"/>
    <property type="resolution" value="3.86 A"/>
    <property type="chains" value="A=1-1453"/>
</dbReference>
<dbReference type="PDB" id="8XMB">
    <property type="method" value="EM"/>
    <property type="resolution" value="3.40 A"/>
    <property type="chains" value="A=1-1453"/>
</dbReference>
<dbReference type="PDB" id="8XMC">
    <property type="method" value="EM"/>
    <property type="resolution" value="3.10 A"/>
    <property type="chains" value="A=1-1453"/>
</dbReference>
<dbReference type="PDB" id="8XMD">
    <property type="method" value="EM"/>
    <property type="resolution" value="3.40 A"/>
    <property type="chains" value="A=1-1453"/>
</dbReference>
<dbReference type="PDB" id="8XME">
    <property type="method" value="EM"/>
    <property type="resolution" value="3.10 A"/>
    <property type="chains" value="A=1-1453"/>
</dbReference>
<dbReference type="PDBsum" id="7EU0"/>
<dbReference type="PDBsum" id="7EU1"/>
<dbReference type="PDBsum" id="8XMB"/>
<dbReference type="PDBsum" id="8XMC"/>
<dbReference type="PDBsum" id="8XMD"/>
<dbReference type="PDBsum" id="8XME"/>
<dbReference type="EMDB" id="EMD-31305"/>
<dbReference type="EMDB" id="EMD-31306"/>
<dbReference type="EMDB" id="EMD-38470"/>
<dbReference type="EMDB" id="EMD-38471"/>
<dbReference type="EMDB" id="EMD-38472"/>
<dbReference type="EMDB" id="EMD-38473"/>
<dbReference type="SMR" id="Q9LQ02"/>
<dbReference type="BioGRID" id="27826">
    <property type="interactions" value="32"/>
</dbReference>
<dbReference type="DIP" id="DIP-48679N"/>
<dbReference type="FunCoup" id="Q9LQ02">
    <property type="interactions" value="768"/>
</dbReference>
<dbReference type="IntAct" id="Q9LQ02">
    <property type="interactions" value="1"/>
</dbReference>
<dbReference type="STRING" id="3702.Q9LQ02"/>
<dbReference type="iPTMnet" id="Q9LQ02"/>
<dbReference type="PaxDb" id="3702-AT1G63020.2"/>
<dbReference type="EnsemblPlants" id="AT1G63020.1">
    <property type="protein sequence ID" value="AT1G63020.1"/>
    <property type="gene ID" value="AT1G63020"/>
</dbReference>
<dbReference type="EnsemblPlants" id="AT1G63020.2">
    <property type="protein sequence ID" value="AT1G63020.2"/>
    <property type="gene ID" value="AT1G63020"/>
</dbReference>
<dbReference type="GeneID" id="842605"/>
<dbReference type="Gramene" id="AT1G63020.1">
    <property type="protein sequence ID" value="AT1G63020.1"/>
    <property type="gene ID" value="AT1G63020"/>
</dbReference>
<dbReference type="Gramene" id="AT1G63020.2">
    <property type="protein sequence ID" value="AT1G63020.2"/>
    <property type="gene ID" value="AT1G63020"/>
</dbReference>
<dbReference type="KEGG" id="ath:AT1G63020"/>
<dbReference type="Araport" id="AT1G63020"/>
<dbReference type="TAIR" id="AT1G63020">
    <property type="gene designation" value="NRPD1A"/>
</dbReference>
<dbReference type="eggNOG" id="KOG0260">
    <property type="taxonomic scope" value="Eukaryota"/>
</dbReference>
<dbReference type="HOGENOM" id="CLU_002449_0_1_1"/>
<dbReference type="InParanoid" id="Q9LQ02"/>
<dbReference type="PhylomeDB" id="Q9LQ02"/>
<dbReference type="PRO" id="PR:Q9LQ02"/>
<dbReference type="Proteomes" id="UP000006548">
    <property type="component" value="Chromosome 1"/>
</dbReference>
<dbReference type="ExpressionAtlas" id="Q9LQ02">
    <property type="expression patterns" value="baseline and differential"/>
</dbReference>
<dbReference type="GO" id="GO:0005739">
    <property type="term" value="C:mitochondrion"/>
    <property type="evidence" value="ECO:0007669"/>
    <property type="project" value="GOC"/>
</dbReference>
<dbReference type="GO" id="GO:0005654">
    <property type="term" value="C:nucleoplasm"/>
    <property type="evidence" value="ECO:0000314"/>
    <property type="project" value="TAIR"/>
</dbReference>
<dbReference type="GO" id="GO:0005634">
    <property type="term" value="C:nucleus"/>
    <property type="evidence" value="ECO:0000314"/>
    <property type="project" value="UniProtKB"/>
</dbReference>
<dbReference type="GO" id="GO:0009536">
    <property type="term" value="C:plastid"/>
    <property type="evidence" value="ECO:0007669"/>
    <property type="project" value="GOC"/>
</dbReference>
<dbReference type="GO" id="GO:0000418">
    <property type="term" value="C:RNA polymerase IV complex"/>
    <property type="evidence" value="ECO:0000314"/>
    <property type="project" value="UniProtKB"/>
</dbReference>
<dbReference type="GO" id="GO:0003677">
    <property type="term" value="F:DNA binding"/>
    <property type="evidence" value="ECO:0007669"/>
    <property type="project" value="InterPro"/>
</dbReference>
<dbReference type="GO" id="GO:0003899">
    <property type="term" value="F:DNA-directed RNA polymerase activity"/>
    <property type="evidence" value="ECO:0007669"/>
    <property type="project" value="UniProtKB-EC"/>
</dbReference>
<dbReference type="GO" id="GO:0046872">
    <property type="term" value="F:metal ion binding"/>
    <property type="evidence" value="ECO:0007669"/>
    <property type="project" value="UniProtKB-KW"/>
</dbReference>
<dbReference type="GO" id="GO:0006351">
    <property type="term" value="P:DNA-templated transcription"/>
    <property type="evidence" value="ECO:0007669"/>
    <property type="project" value="InterPro"/>
</dbReference>
<dbReference type="GO" id="GO:0031047">
    <property type="term" value="P:regulatory ncRNA-mediated gene silencing"/>
    <property type="evidence" value="ECO:0000315"/>
    <property type="project" value="TAIR"/>
</dbReference>
<dbReference type="GO" id="GO:0030422">
    <property type="term" value="P:siRNA processing"/>
    <property type="evidence" value="ECO:0000315"/>
    <property type="project" value="TAIR"/>
</dbReference>
<dbReference type="GO" id="GO:0010495">
    <property type="term" value="P:siRNA-mediated long-distance post-transcriptional gene silencing"/>
    <property type="evidence" value="ECO:0000315"/>
    <property type="project" value="TAIR"/>
</dbReference>
<dbReference type="CDD" id="cd02737">
    <property type="entry name" value="RNAP_IV_NRPD1_C"/>
    <property type="match status" value="1"/>
</dbReference>
<dbReference type="CDD" id="cd10506">
    <property type="entry name" value="RNAP_IV_RPD1_N"/>
    <property type="match status" value="1"/>
</dbReference>
<dbReference type="FunFam" id="1.10.274.100:FF:000010">
    <property type="entry name" value="DNA-directed RNA polymerase subunit"/>
    <property type="match status" value="1"/>
</dbReference>
<dbReference type="FunFam" id="4.10.860.120:FF:000010">
    <property type="entry name" value="DNA-directed RNA polymerase subunit"/>
    <property type="match status" value="1"/>
</dbReference>
<dbReference type="Gene3D" id="1.10.132.30">
    <property type="match status" value="1"/>
</dbReference>
<dbReference type="Gene3D" id="2.40.40.20">
    <property type="match status" value="1"/>
</dbReference>
<dbReference type="Gene3D" id="3.10.450.40">
    <property type="match status" value="1"/>
</dbReference>
<dbReference type="Gene3D" id="6.20.50.80">
    <property type="match status" value="1"/>
</dbReference>
<dbReference type="Gene3D" id="3.30.1490.180">
    <property type="entry name" value="RNA polymerase ii"/>
    <property type="match status" value="1"/>
</dbReference>
<dbReference type="Gene3D" id="4.10.860.120">
    <property type="entry name" value="RNA polymerase II, clamp domain"/>
    <property type="match status" value="1"/>
</dbReference>
<dbReference type="Gene3D" id="1.10.274.100">
    <property type="entry name" value="RNA polymerase Rpb1, domain 3"/>
    <property type="match status" value="1"/>
</dbReference>
<dbReference type="InterPro" id="IPR045867">
    <property type="entry name" value="DNA-dir_RpoC_beta_prime"/>
</dbReference>
<dbReference type="InterPro" id="IPR040402">
    <property type="entry name" value="NRPD1_C"/>
</dbReference>
<dbReference type="InterPro" id="IPR040403">
    <property type="entry name" value="NRPD1_N"/>
</dbReference>
<dbReference type="InterPro" id="IPR000722">
    <property type="entry name" value="RNA_pol_asu"/>
</dbReference>
<dbReference type="InterPro" id="IPR006592">
    <property type="entry name" value="RNA_pol_N"/>
</dbReference>
<dbReference type="InterPro" id="IPR007066">
    <property type="entry name" value="RNA_pol_Rpb1_3"/>
</dbReference>
<dbReference type="InterPro" id="IPR042102">
    <property type="entry name" value="RNA_pol_Rpb1_3_sf"/>
</dbReference>
<dbReference type="InterPro" id="IPR007083">
    <property type="entry name" value="RNA_pol_Rpb1_4"/>
</dbReference>
<dbReference type="InterPro" id="IPR044893">
    <property type="entry name" value="RNA_pol_Rpb1_clamp_domain"/>
</dbReference>
<dbReference type="InterPro" id="IPR038120">
    <property type="entry name" value="Rpb1_funnel_sf"/>
</dbReference>
<dbReference type="PANTHER" id="PTHR19376">
    <property type="entry name" value="DNA-DIRECTED RNA POLYMERASE"/>
    <property type="match status" value="1"/>
</dbReference>
<dbReference type="PANTHER" id="PTHR19376:SF36">
    <property type="entry name" value="DNA-DIRECTED RNA POLYMERASE IV SUBUNIT 1"/>
    <property type="match status" value="1"/>
</dbReference>
<dbReference type="Pfam" id="PF11523">
    <property type="entry name" value="DUF3223"/>
    <property type="match status" value="1"/>
</dbReference>
<dbReference type="Pfam" id="PF00623">
    <property type="entry name" value="RNA_pol_Rpb1_2"/>
    <property type="match status" value="1"/>
</dbReference>
<dbReference type="Pfam" id="PF04983">
    <property type="entry name" value="RNA_pol_Rpb1_3"/>
    <property type="match status" value="1"/>
</dbReference>
<dbReference type="Pfam" id="PF05000">
    <property type="entry name" value="RNA_pol_Rpb1_4"/>
    <property type="match status" value="1"/>
</dbReference>
<dbReference type="SMART" id="SM00663">
    <property type="entry name" value="RPOLA_N"/>
    <property type="match status" value="1"/>
</dbReference>
<dbReference type="SUPFAM" id="SSF64484">
    <property type="entry name" value="beta and beta-prime subunits of DNA dependent RNA-polymerase"/>
    <property type="match status" value="1"/>
</dbReference>
<reference key="1">
    <citation type="journal article" date="2005" name="Genes Dev.">
        <title>Reinforcement of silencing at transposons and highly repeated sequences requires the concerted action of two distinct RNA polymerases IV in Arabidopsis.</title>
        <authorList>
            <person name="Pontier D."/>
            <person name="Yahubyan G."/>
            <person name="Vega D."/>
            <person name="Bulski A."/>
            <person name="Saez-Vasquez J."/>
            <person name="Hakimi M.-A."/>
            <person name="Lerbs-Mache S."/>
            <person name="Colot V."/>
            <person name="Lagrange T."/>
        </authorList>
    </citation>
    <scope>NUCLEOTIDE SEQUENCE [MRNA]</scope>
    <scope>FUNCTION</scope>
    <scope>DISRUPTION PHENOTYPE</scope>
    <scope>SUBUNIT</scope>
    <scope>SUBCELLULAR LOCATION</scope>
    <scope>TISSUE SPECIFICITY</scope>
</reference>
<reference key="2">
    <citation type="journal article" date="2007" name="J. Mol. Evol.">
        <title>A multistep process gave rise to RNA polymerase IV of land plants.</title>
        <authorList>
            <person name="Luo J."/>
            <person name="Hall B.D."/>
        </authorList>
    </citation>
    <scope>NUCLEOTIDE SEQUENCE [MRNA]</scope>
    <scope>TISSUE SPECIFICITY</scope>
</reference>
<reference key="3">
    <citation type="journal article" date="2000" name="Nature">
        <title>Sequence and analysis of chromosome 1 of the plant Arabidopsis thaliana.</title>
        <authorList>
            <person name="Theologis A."/>
            <person name="Ecker J.R."/>
            <person name="Palm C.J."/>
            <person name="Federspiel N.A."/>
            <person name="Kaul S."/>
            <person name="White O."/>
            <person name="Alonso J."/>
            <person name="Altafi H."/>
            <person name="Araujo R."/>
            <person name="Bowman C.L."/>
            <person name="Brooks S.Y."/>
            <person name="Buehler E."/>
            <person name="Chan A."/>
            <person name="Chao Q."/>
            <person name="Chen H."/>
            <person name="Cheuk R.F."/>
            <person name="Chin C.W."/>
            <person name="Chung M.K."/>
            <person name="Conn L."/>
            <person name="Conway A.B."/>
            <person name="Conway A.R."/>
            <person name="Creasy T.H."/>
            <person name="Dewar K."/>
            <person name="Dunn P."/>
            <person name="Etgu P."/>
            <person name="Feldblyum T.V."/>
            <person name="Feng J.-D."/>
            <person name="Fong B."/>
            <person name="Fujii C.Y."/>
            <person name="Gill J.E."/>
            <person name="Goldsmith A.D."/>
            <person name="Haas B."/>
            <person name="Hansen N.F."/>
            <person name="Hughes B."/>
            <person name="Huizar L."/>
            <person name="Hunter J.L."/>
            <person name="Jenkins J."/>
            <person name="Johnson-Hopson C."/>
            <person name="Khan S."/>
            <person name="Khaykin E."/>
            <person name="Kim C.J."/>
            <person name="Koo H.L."/>
            <person name="Kremenetskaia I."/>
            <person name="Kurtz D.B."/>
            <person name="Kwan A."/>
            <person name="Lam B."/>
            <person name="Langin-Hooper S."/>
            <person name="Lee A."/>
            <person name="Lee J.M."/>
            <person name="Lenz C.A."/>
            <person name="Li J.H."/>
            <person name="Li Y.-P."/>
            <person name="Lin X."/>
            <person name="Liu S.X."/>
            <person name="Liu Z.A."/>
            <person name="Luros J.S."/>
            <person name="Maiti R."/>
            <person name="Marziali A."/>
            <person name="Militscher J."/>
            <person name="Miranda M."/>
            <person name="Nguyen M."/>
            <person name="Nierman W.C."/>
            <person name="Osborne B.I."/>
            <person name="Pai G."/>
            <person name="Peterson J."/>
            <person name="Pham P.K."/>
            <person name="Rizzo M."/>
            <person name="Rooney T."/>
            <person name="Rowley D."/>
            <person name="Sakano H."/>
            <person name="Salzberg S.L."/>
            <person name="Schwartz J.R."/>
            <person name="Shinn P."/>
            <person name="Southwick A.M."/>
            <person name="Sun H."/>
            <person name="Tallon L.J."/>
            <person name="Tambunga G."/>
            <person name="Toriumi M.J."/>
            <person name="Town C.D."/>
            <person name="Utterback T."/>
            <person name="Van Aken S."/>
            <person name="Vaysberg M."/>
            <person name="Vysotskaia V.S."/>
            <person name="Walker M."/>
            <person name="Wu D."/>
            <person name="Yu G."/>
            <person name="Fraser C.M."/>
            <person name="Venter J.C."/>
            <person name="Davis R.W."/>
        </authorList>
    </citation>
    <scope>NUCLEOTIDE SEQUENCE [LARGE SCALE GENOMIC DNA]</scope>
    <source>
        <strain>cv. Columbia</strain>
    </source>
</reference>
<reference key="4">
    <citation type="journal article" date="2017" name="Plant J.">
        <title>Araport11: a complete reannotation of the Arabidopsis thaliana reference genome.</title>
        <authorList>
            <person name="Cheng C.Y."/>
            <person name="Krishnakumar V."/>
            <person name="Chan A.P."/>
            <person name="Thibaud-Nissen F."/>
            <person name="Schobel S."/>
            <person name="Town C.D."/>
        </authorList>
    </citation>
    <scope>GENOME REANNOTATION</scope>
    <source>
        <strain>cv. Columbia</strain>
    </source>
</reference>
<reference key="5">
    <citation type="journal article" date="2000" name="Cell">
        <title>An RNA-dependent RNA polymerase gene in Arabidopsis is required for posttranscriptional gene silencing mediated by a transgene but not by a virus.</title>
        <authorList>
            <person name="Dalmay T."/>
            <person name="Hamilton A."/>
            <person name="Rudd S."/>
            <person name="Angell S."/>
            <person name="Baulcombe D.C."/>
        </authorList>
    </citation>
    <scope>FUNCTION</scope>
    <scope>DISRUPTION PHENOTYPE</scope>
</reference>
<reference key="6">
    <citation type="journal article" date="2002" name="EMBO J.">
        <title>Two classes of short interfering RNA in RNA silencing.</title>
        <authorList>
            <person name="Hamilton A."/>
            <person name="Voinnet O."/>
            <person name="Chappell L."/>
            <person name="Baulcombe D."/>
        </authorList>
    </citation>
    <scope>FUNCTION</scope>
    <scope>DISRUPTION PHENOTYPE</scope>
</reference>
<reference key="7">
    <citation type="journal article" date="2005" name="Cell">
        <title>Plant nuclear RNA polymerase IV mediates siRNA and DNA methylation-dependent heterochromatin formation.</title>
        <authorList>
            <person name="Onodera Y."/>
            <person name="Haag J.R."/>
            <person name="Ream T."/>
            <person name="Nunes P.C."/>
            <person name="Pontes O."/>
            <person name="Pikaard C.S."/>
        </authorList>
    </citation>
    <scope>FUNCTION</scope>
    <scope>DISRUPTION PHENOTYPE</scope>
</reference>
<reference key="8">
    <citation type="journal article" date="2005" name="Cell">
        <title>Endogenous siRNAs derived from a pair of natural cis-antisense transcripts regulate salt tolerance in Arabidopsis.</title>
        <authorList>
            <person name="Borsani O."/>
            <person name="Zhu J."/>
            <person name="Verslues P.E."/>
            <person name="Sunkar R."/>
            <person name="Zhu J.-K."/>
        </authorList>
    </citation>
    <scope>FUNCTION</scope>
    <scope>DISRUPTION PHENOTYPE</scope>
</reference>
<reference key="9">
    <citation type="journal article" date="2005" name="Nat. Genet.">
        <title>DICER-LIKE 4 is required for RNA interference and produces the 21-nucleotide small interfering RNA component of the plant cell-to-cell silencing signal.</title>
        <authorList>
            <person name="Dunoyer P."/>
            <person name="Himber C."/>
            <person name="Voinnet O."/>
        </authorList>
    </citation>
    <scope>FUNCTION</scope>
    <scope>DISRUPTION PHENOTYPE</scope>
</reference>
<reference key="10">
    <citation type="journal article" date="2005" name="Science">
        <title>RNA polymerase IV directs silencing of endogenous DNA.</title>
        <authorList>
            <person name="Herr A.J."/>
            <person name="Jensen M.B."/>
            <person name="Dalmay T."/>
            <person name="Baulcombe D.C."/>
        </authorList>
    </citation>
    <scope>FUNCTION</scope>
    <scope>DISRUPTION PHENOTYPE</scope>
</reference>
<reference key="11">
    <citation type="journal article" date="2006" name="Cell">
        <title>The Arabidopsis chromatin-modifying nuclear siRNA pathway involves a nucleolar RNA processing center.</title>
        <authorList>
            <person name="Pontes O."/>
            <person name="Li C.F."/>
            <person name="Nunes P.C."/>
            <person name="Haag J."/>
            <person name="Ream T."/>
            <person name="Vitins A."/>
            <person name="Jacobsen S.E."/>
            <person name="Pikaard C.S."/>
        </authorList>
    </citation>
    <scope>FUNCTION</scope>
    <scope>DISRUPTION PHENOTYPE</scope>
    <scope>SUBCELLULAR LOCATION</scope>
    <scope>INTERACTION WITH NRPD2</scope>
</reference>
<reference key="12">
    <citation type="journal article" date="2006" name="Cell">
        <title>An ARGONAUTE4-containing nuclear processing center colocalized with Cajal bodies in Arabidopsis thaliana.</title>
        <authorList>
            <person name="Li C.F."/>
            <person name="Pontes O."/>
            <person name="El-Shami M."/>
            <person name="Henderson I.R."/>
            <person name="Bernatavichute Y.V."/>
            <person name="Chan S.W.-L."/>
            <person name="Lagrange T."/>
            <person name="Pikaard C.S."/>
            <person name="Jacobsen S.E."/>
        </authorList>
    </citation>
    <scope>SUBCELLULAR LOCATION</scope>
</reference>
<reference key="13">
    <citation type="journal article" date="2007" name="Nat. Genet.">
        <title>Intra- and intercellular RNA interference in Arabidopsis thaliana requires components of the microRNA and heterochromatic silencing pathways.</title>
        <authorList>
            <person name="Dunoyer P."/>
            <person name="Himber C."/>
            <person name="Ruiz-Ferrer V."/>
            <person name="Alioua A."/>
            <person name="Voinnet O."/>
        </authorList>
    </citation>
    <scope>FUNCTION</scope>
    <scope>DISRUPTION PHENOTYPE</scope>
    <source>
        <strain>cv. Columbia</strain>
        <strain>cv. Landsberg erecta</strain>
        <strain>cv. No-0</strain>
    </source>
</reference>
<reference key="14">
    <citation type="journal article" date="2007" name="Plant Cell">
        <title>An SNF2 protein associated with nuclear RNA silencing and the spread of a silencing signal between cells in Arabidopsis.</title>
        <authorList>
            <person name="Smith L.M."/>
            <person name="Pontes O."/>
            <person name="Searle I."/>
            <person name="Yelina N."/>
            <person name="Yousafzai F.K."/>
            <person name="Herr A.J."/>
            <person name="Pikaard C.S."/>
            <person name="Baulcombe D.C."/>
        </authorList>
    </citation>
    <scope>FUNCTION</scope>
    <scope>DISRUPTION PHENOTYPE</scope>
</reference>
<reference key="15">
    <citation type="journal article" date="2007" name="Proc. Natl. Acad. Sci. U.S.A.">
        <title>Nuclear gene silencing directs reception of long-distance mRNA silencing in Arabidopsis.</title>
        <authorList>
            <person name="Brosnan C.A."/>
            <person name="Mitter N."/>
            <person name="Christie M."/>
            <person name="Smith N.A."/>
            <person name="Waterhouse P.M."/>
            <person name="Carroll B.J."/>
        </authorList>
    </citation>
    <scope>FUNCTION</scope>
    <scope>DISRUPTION PHENOTYPE</scope>
</reference>
<reference key="16">
    <citation type="journal article" date="2007" name="Proc. Natl. Acad. Sci. U.S.A.">
        <title>Role of RNA polymerase IV in plant small RNA metabolism.</title>
        <authorList>
            <person name="Zhang X."/>
            <person name="Henderson I.R."/>
            <person name="Lu C."/>
            <person name="Green P.J."/>
            <person name="Jacobsen S.E."/>
        </authorList>
    </citation>
    <scope>FUNCTION</scope>
    <source>
        <strain>cv. Columbia</strain>
    </source>
</reference>
<reference key="17">
    <citation type="journal article" date="2008" name="Plant J.">
        <title>NRPD1a and NRPD1b are required to maintain post-transcriptional RNA silencing and RNA-directed DNA methylation in Arabidopsis.</title>
        <authorList>
            <person name="Eamens A."/>
            <person name="Vaistij F.E."/>
            <person name="Jones L."/>
        </authorList>
    </citation>
    <scope>FUNCTION</scope>
    <scope>DISRUPTION PHENOTYPE</scope>
</reference>
<reference key="18">
    <citation type="journal article" date="2008" name="Proc. Natl. Acad. Sci. U.S.A.">
        <title>PolIVb influences RNA-directed DNA methylation independently of its role in siRNA biogenesis.</title>
        <authorList>
            <person name="Mosher R.A."/>
            <person name="Schwach F."/>
            <person name="Studholme D."/>
            <person name="Baulcombe D.C."/>
        </authorList>
    </citation>
    <scope>FUNCTION</scope>
    <scope>DISRUPTION PHENOTYPE</scope>
    <source>
        <strain>cv. Columbia</strain>
    </source>
</reference>
<reference key="19">
    <citation type="journal article" date="2008" name="Plant Physiol.">
        <title>Invasion of the Arabidopsis genome by the tobacco retrotransposon Tnt1 is controlled by reversible transcriptional gene silencing.</title>
        <authorList>
            <person name="Perez-Hormaeche J."/>
            <person name="Potet F."/>
            <person name="Beauclair L."/>
            <person name="Le Masson I."/>
            <person name="Courtial B."/>
            <person name="Bouche N."/>
            <person name="Lucas H."/>
        </authorList>
    </citation>
    <scope>FUNCTION</scope>
    <scope>DISRUPTION PHENOTYPE</scope>
</reference>
<reference key="20">
    <citation type="journal article" date="2009" name="Genes Dev.">
        <title>NRPD4, a protein related to the RPB4 subunit of RNA polymerase II, is a component of RNA polymerases IV and V and is required for RNA-directed DNA methylation.</title>
        <authorList>
            <person name="He X.-J."/>
            <person name="Hsu Y.-F."/>
            <person name="Pontes O."/>
            <person name="Zhu J."/>
            <person name="Lu J."/>
            <person name="Bressan R.A."/>
            <person name="Pikaard C."/>
            <person name="Wang C.-S."/>
            <person name="Zhu J.-K."/>
        </authorList>
    </citation>
    <scope>INTERACTION WITH NRPD4</scope>
</reference>
<reference key="21">
    <citation type="journal article" date="2009" name="Mol. Cell">
        <title>Subunit compositions of the RNA-silencing enzymes Pol IV and Pol V reveal their origins as specialized forms of RNA polymerase II.</title>
        <authorList>
            <person name="Ream T.S."/>
            <person name="Haag J.R."/>
            <person name="Wierzbicki A.T."/>
            <person name="Nicora C.D."/>
            <person name="Norbeck A.D."/>
            <person name="Zhu J.K."/>
            <person name="Hagen G."/>
            <person name="Guilfoyle T.J."/>
            <person name="Pasa-Tolic L."/>
            <person name="Pikaard C.S."/>
        </authorList>
    </citation>
    <scope>FUNCTION</scope>
    <scope>DISRUPTION PHENOTYPE</scope>
    <scope>IDENTIFICATION BY MASS SPECTROMETRY</scope>
    <scope>GENE FAMILY</scope>
    <scope>SUBUNIT</scope>
    <scope>NOMENCLATURE</scope>
</reference>
<reference key="22">
    <citation type="journal article" date="2011" name="PLoS Genet.">
        <title>SHH1, a homeodomain protein required for DNA methylation, as well as RDR2, RDM4, and chromatin remodeling factors, associate with RNA polymerase IV.</title>
        <authorList>
            <person name="Law J.A."/>
            <person name="Vashisht A.A."/>
            <person name="Wohlschlegel J.A."/>
            <person name="Jacobsen S.E."/>
        </authorList>
    </citation>
    <scope>IDENTIFICATION BY MASS SPECTROMETRY</scope>
    <scope>INTERACTION WITH NRPD2; NRPD3; NRPD3B; NRPD4; NRPD5; NRPD5B; NRPD6A; NRPD7; NRPD7B; NRPD9A; NRPD9B; NRPD10; NRPD11; NRPD12; RDR2; RDM4; CLSY1; CLSY2; CLSY3; CLSY4 AND SHH1</scope>
    <scope>SUBUNIT</scope>
</reference>
<reference key="23">
    <citation type="journal article" date="2013" name="Proc. Natl. Acad. Sci. U.S.A.">
        <title>DTF1 is a core component of RNA-directed DNA methylation and may assist in the recruitment of Pol IV.</title>
        <authorList>
            <person name="Zhang H."/>
            <person name="Ma Z.Y."/>
            <person name="Zeng L."/>
            <person name="Tanaka K."/>
            <person name="Zhang C.J."/>
            <person name="Ma J."/>
            <person name="Bai G."/>
            <person name="Wang P."/>
            <person name="Zhang S.W."/>
            <person name="Liu Z.W."/>
            <person name="Cai T."/>
            <person name="Tang K."/>
            <person name="Liu R."/>
            <person name="Shi X."/>
            <person name="He X.J."/>
            <person name="Zhu J.K."/>
        </authorList>
    </citation>
    <scope>IDENTIFICATION BY MASS SPECTROMETRY</scope>
    <scope>INTERACTION WITH SHH1 AND CLSY1</scope>
</reference>
<protein>
    <recommendedName>
        <fullName>DNA-directed RNA polymerase IV subunit 1</fullName>
    </recommendedName>
    <alternativeName>
        <fullName>DNA-directed RNA polymerase D subunit 1</fullName>
        <shortName>AtNRPD1a</shortName>
        <shortName>Nuclear RNA polymerase D 1a</shortName>
        <ecNumber>2.7.7.6</ecNumber>
    </alternativeName>
    <alternativeName>
        <fullName>Protein RNA-DIRECTED DNA METHYLATION DEFECTIVE 3</fullName>
    </alternativeName>
    <alternativeName>
        <fullName>Protein SILENCING DEFECTIVE 4</fullName>
    </alternativeName>
    <alternativeName>
        <fullName>Protein SILENCING MOVEMENT DEFICIENT 2</fullName>
    </alternativeName>
    <alternativeName>
        <fullName>RNA polymerase IV subunit 1a</fullName>
        <shortName>POL IV 1a</shortName>
    </alternativeName>
</protein>
<feature type="chain" id="PRO_0000407922" description="DNA-directed RNA polymerase IV subunit 1">
    <location>
        <begin position="1"/>
        <end position="1453"/>
    </location>
</feature>
<feature type="region of interest" description="Bridging helix" evidence="1">
    <location>
        <begin position="806"/>
        <end position="818"/>
    </location>
</feature>
<feature type="binding site" evidence="2">
    <location>
        <position position="56"/>
    </location>
    <ligand>
        <name>Zn(2+)</name>
        <dbReference type="ChEBI" id="CHEBI:29105"/>
        <label>1</label>
    </ligand>
</feature>
<feature type="binding site" evidence="2">
    <location>
        <position position="59"/>
    </location>
    <ligand>
        <name>Zn(2+)</name>
        <dbReference type="ChEBI" id="CHEBI:29105"/>
        <label>1</label>
    </ligand>
</feature>
<feature type="binding site" evidence="2">
    <location>
        <position position="67"/>
    </location>
    <ligand>
        <name>Zn(2+)</name>
        <dbReference type="ChEBI" id="CHEBI:29105"/>
        <label>1</label>
    </ligand>
</feature>
<feature type="binding site" evidence="2">
    <location>
        <position position="70"/>
    </location>
    <ligand>
        <name>Zn(2+)</name>
        <dbReference type="ChEBI" id="CHEBI:29105"/>
        <label>1</label>
    </ligand>
</feature>
<feature type="binding site" evidence="2">
    <location>
        <position position="97"/>
    </location>
    <ligand>
        <name>Zn(2+)</name>
        <dbReference type="ChEBI" id="CHEBI:29105"/>
        <label>2</label>
    </ligand>
</feature>
<feature type="binding site" evidence="2">
    <location>
        <position position="100"/>
    </location>
    <ligand>
        <name>Zn(2+)</name>
        <dbReference type="ChEBI" id="CHEBI:29105"/>
        <label>2</label>
    </ligand>
</feature>
<feature type="binding site" evidence="2">
    <location>
        <position position="121"/>
    </location>
    <ligand>
        <name>Zn(2+)</name>
        <dbReference type="ChEBI" id="CHEBI:29105"/>
        <label>2</label>
    </ligand>
</feature>
<feature type="binding site" evidence="2">
    <location>
        <position position="447"/>
    </location>
    <ligand>
        <name>Mg(2+)</name>
        <dbReference type="ChEBI" id="CHEBI:18420"/>
        <note>catalytic</note>
    </ligand>
</feature>
<feature type="binding site" evidence="2">
    <location>
        <position position="449"/>
    </location>
    <ligand>
        <name>Mg(2+)</name>
        <dbReference type="ChEBI" id="CHEBI:18420"/>
        <note>catalytic</note>
    </ligand>
</feature>
<feature type="binding site" evidence="2">
    <location>
        <position position="451"/>
    </location>
    <ligand>
        <name>Mg(2+)</name>
        <dbReference type="ChEBI" id="CHEBI:18420"/>
        <note>catalytic</note>
    </ligand>
</feature>
<feature type="strand" evidence="25">
    <location>
        <begin position="15"/>
        <end position="22"/>
    </location>
</feature>
<feature type="helix" evidence="25">
    <location>
        <begin position="25"/>
        <end position="30"/>
    </location>
</feature>
<feature type="strand" evidence="25">
    <location>
        <begin position="49"/>
        <end position="55"/>
    </location>
</feature>
<feature type="strand" evidence="25">
    <location>
        <begin position="57"/>
        <end position="61"/>
    </location>
</feature>
<feature type="strand" evidence="25">
    <location>
        <begin position="64"/>
        <end position="66"/>
    </location>
</feature>
<feature type="strand" evidence="25">
    <location>
        <begin position="72"/>
        <end position="81"/>
    </location>
</feature>
<feature type="helix" evidence="26">
    <location>
        <begin position="83"/>
        <end position="85"/>
    </location>
</feature>
<feature type="turn" evidence="25">
    <location>
        <begin position="86"/>
        <end position="92"/>
    </location>
</feature>
<feature type="turn" evidence="26">
    <location>
        <begin position="98"/>
        <end position="100"/>
    </location>
</feature>
<feature type="turn" evidence="26">
    <location>
        <begin position="119"/>
        <end position="121"/>
    </location>
</feature>
<feature type="helix" evidence="26">
    <location>
        <begin position="123"/>
        <end position="125"/>
    </location>
</feature>
<feature type="strand" evidence="26">
    <location>
        <begin position="130"/>
        <end position="134"/>
    </location>
</feature>
<feature type="strand" evidence="26">
    <location>
        <begin position="137"/>
        <end position="141"/>
    </location>
</feature>
<feature type="strand" evidence="26">
    <location>
        <begin position="145"/>
        <end position="149"/>
    </location>
</feature>
<feature type="helix" evidence="26">
    <location>
        <begin position="151"/>
        <end position="159"/>
    </location>
</feature>
<feature type="helix" evidence="26">
    <location>
        <begin position="167"/>
        <end position="170"/>
    </location>
</feature>
<feature type="strand" evidence="26">
    <location>
        <begin position="188"/>
        <end position="190"/>
    </location>
</feature>
<feature type="helix" evidence="26">
    <location>
        <begin position="193"/>
        <end position="200"/>
    </location>
</feature>
<feature type="helix" evidence="25">
    <location>
        <begin position="207"/>
        <end position="209"/>
    </location>
</feature>
<feature type="strand" evidence="25">
    <location>
        <begin position="211"/>
        <end position="213"/>
    </location>
</feature>
<feature type="strand" evidence="25">
    <location>
        <begin position="218"/>
        <end position="225"/>
    </location>
</feature>
<feature type="turn" evidence="26">
    <location>
        <begin position="228"/>
        <end position="230"/>
    </location>
</feature>
<feature type="turn" evidence="25">
    <location>
        <begin position="251"/>
        <end position="255"/>
    </location>
</feature>
<feature type="helix" evidence="25">
    <location>
        <begin position="263"/>
        <end position="273"/>
    </location>
</feature>
<feature type="helix" evidence="25">
    <location>
        <begin position="274"/>
        <end position="276"/>
    </location>
</feature>
<feature type="helix" evidence="25">
    <location>
        <begin position="306"/>
        <end position="312"/>
    </location>
</feature>
<feature type="strand" evidence="25">
    <location>
        <begin position="315"/>
        <end position="328"/>
    </location>
</feature>
<feature type="strand" evidence="25">
    <location>
        <begin position="336"/>
        <end position="340"/>
    </location>
</feature>
<feature type="helix" evidence="25">
    <location>
        <begin position="341"/>
        <end position="344"/>
    </location>
</feature>
<feature type="strand" evidence="25">
    <location>
        <begin position="348"/>
        <end position="350"/>
    </location>
</feature>
<feature type="strand" evidence="25">
    <location>
        <begin position="398"/>
        <end position="400"/>
    </location>
</feature>
<feature type="strand" evidence="25">
    <location>
        <begin position="406"/>
        <end position="410"/>
    </location>
</feature>
<feature type="helix" evidence="25">
    <location>
        <begin position="417"/>
        <end position="419"/>
    </location>
</feature>
<feature type="strand" evidence="25">
    <location>
        <begin position="420"/>
        <end position="429"/>
    </location>
</feature>
<feature type="strand" evidence="25">
    <location>
        <begin position="434"/>
        <end position="436"/>
    </location>
</feature>
<feature type="helix" evidence="25">
    <location>
        <begin position="438"/>
        <end position="440"/>
    </location>
</feature>
<feature type="helix" evidence="25">
    <location>
        <begin position="441"/>
        <end position="444"/>
    </location>
</feature>
<feature type="strand" evidence="25">
    <location>
        <begin position="448"/>
        <end position="450"/>
    </location>
</feature>
<feature type="strand" evidence="25">
    <location>
        <begin position="452"/>
        <end position="456"/>
    </location>
</feature>
<feature type="helix" evidence="25">
    <location>
        <begin position="461"/>
        <end position="465"/>
    </location>
</feature>
<feature type="helix" evidence="25">
    <location>
        <begin position="467"/>
        <end position="470"/>
    </location>
</feature>
<feature type="turn" evidence="25">
    <location>
        <begin position="473"/>
        <end position="475"/>
    </location>
</feature>
<feature type="turn" evidence="25">
    <location>
        <begin position="480"/>
        <end position="482"/>
    </location>
</feature>
<feature type="strand" evidence="25">
    <location>
        <begin position="483"/>
        <end position="486"/>
    </location>
</feature>
<feature type="helix" evidence="25">
    <location>
        <begin position="492"/>
        <end position="502"/>
    </location>
</feature>
<feature type="helix" evidence="25">
    <location>
        <begin position="510"/>
        <end position="516"/>
    </location>
</feature>
<feature type="strand" evidence="26">
    <location>
        <begin position="520"/>
        <end position="522"/>
    </location>
</feature>
<feature type="strand" evidence="25">
    <location>
        <begin position="528"/>
        <end position="530"/>
    </location>
</feature>
<feature type="helix" evidence="25">
    <location>
        <begin position="544"/>
        <end position="547"/>
    </location>
</feature>
<feature type="helix" evidence="26">
    <location>
        <begin position="548"/>
        <end position="550"/>
    </location>
</feature>
<feature type="strand" evidence="25">
    <location>
        <begin position="557"/>
        <end position="559"/>
    </location>
</feature>
<feature type="turn" evidence="25">
    <location>
        <begin position="560"/>
        <end position="563"/>
    </location>
</feature>
<feature type="strand" evidence="25">
    <location>
        <begin position="564"/>
        <end position="566"/>
    </location>
</feature>
<feature type="strand" evidence="25">
    <location>
        <begin position="571"/>
        <end position="573"/>
    </location>
</feature>
<feature type="strand" evidence="25">
    <location>
        <begin position="579"/>
        <end position="586"/>
    </location>
</feature>
<feature type="helix" evidence="25">
    <location>
        <begin position="588"/>
        <end position="595"/>
    </location>
</feature>
<feature type="strand" evidence="25">
    <location>
        <begin position="597"/>
        <end position="599"/>
    </location>
</feature>
<feature type="helix" evidence="25">
    <location>
        <begin position="601"/>
        <end position="618"/>
    </location>
</feature>
<feature type="helix" evidence="25">
    <location>
        <begin position="624"/>
        <end position="628"/>
    </location>
</feature>
<feature type="strand" evidence="25">
    <location>
        <begin position="630"/>
        <end position="632"/>
    </location>
</feature>
<feature type="helix" evidence="25">
    <location>
        <begin position="633"/>
        <end position="657"/>
    </location>
</feature>
<feature type="strand" evidence="25">
    <location>
        <begin position="661"/>
        <end position="664"/>
    </location>
</feature>
<feature type="helix" evidence="25">
    <location>
        <begin position="665"/>
        <end position="668"/>
    </location>
</feature>
<feature type="strand" evidence="25">
    <location>
        <begin position="669"/>
        <end position="671"/>
    </location>
</feature>
<feature type="turn" evidence="25">
    <location>
        <begin position="676"/>
        <end position="678"/>
    </location>
</feature>
<feature type="strand" evidence="25">
    <location>
        <begin position="679"/>
        <end position="681"/>
    </location>
</feature>
<feature type="helix" evidence="25">
    <location>
        <begin position="683"/>
        <end position="692"/>
    </location>
</feature>
<feature type="helix" evidence="25">
    <location>
        <begin position="695"/>
        <end position="705"/>
    </location>
</feature>
<feature type="turn" evidence="25">
    <location>
        <begin position="706"/>
        <end position="711"/>
    </location>
</feature>
<feature type="helix" evidence="25">
    <location>
        <begin position="712"/>
        <end position="714"/>
    </location>
</feature>
<feature type="helix" evidence="25">
    <location>
        <begin position="715"/>
        <end position="718"/>
    </location>
</feature>
<feature type="helix" evidence="25">
    <location>
        <begin position="724"/>
        <end position="730"/>
    </location>
</feature>
<feature type="helix" evidence="25">
    <location>
        <begin position="737"/>
        <end position="744"/>
    </location>
</feature>
<feature type="strand" evidence="25">
    <location>
        <begin position="748"/>
        <end position="751"/>
    </location>
</feature>
<feature type="helix" evidence="25">
    <location>
        <begin position="766"/>
        <end position="769"/>
    </location>
</feature>
<feature type="turn" evidence="25">
    <location>
        <begin position="775"/>
        <end position="777"/>
    </location>
</feature>
<feature type="strand" evidence="25">
    <location>
        <begin position="793"/>
        <end position="796"/>
    </location>
</feature>
<feature type="turn" evidence="25">
    <location>
        <begin position="800"/>
        <end position="802"/>
    </location>
</feature>
<feature type="helix" evidence="25">
    <location>
        <begin position="806"/>
        <end position="817"/>
    </location>
</feature>
<feature type="helix" evidence="25">
    <location>
        <begin position="827"/>
        <end position="839"/>
    </location>
</feature>
<feature type="strand" evidence="26">
    <location>
        <begin position="842"/>
        <end position="844"/>
    </location>
</feature>
<feature type="strand" evidence="25">
    <location>
        <begin position="846"/>
        <end position="848"/>
    </location>
</feature>
<feature type="strand" evidence="26">
    <location>
        <begin position="850"/>
        <end position="852"/>
    </location>
</feature>
<feature type="strand" evidence="25">
    <location>
        <begin position="853"/>
        <end position="856"/>
    </location>
</feature>
<feature type="strand" evidence="25">
    <location>
        <begin position="858"/>
        <end position="862"/>
    </location>
</feature>
<feature type="strand" evidence="25">
    <location>
        <begin position="873"/>
        <end position="875"/>
    </location>
</feature>
<feature type="helix" evidence="25">
    <location>
        <begin position="877"/>
        <end position="890"/>
    </location>
</feature>
<feature type="strand" evidence="25">
    <location>
        <begin position="897"/>
        <end position="901"/>
    </location>
</feature>
<feature type="helix" evidence="25">
    <location>
        <begin position="904"/>
        <end position="912"/>
    </location>
</feature>
<feature type="strand" evidence="25">
    <location>
        <begin position="924"/>
        <end position="927"/>
    </location>
</feature>
<feature type="helix" evidence="25">
    <location>
        <begin position="931"/>
        <end position="935"/>
    </location>
</feature>
<feature type="helix" evidence="25">
    <location>
        <begin position="939"/>
        <end position="950"/>
    </location>
</feature>
<feature type="strand" evidence="25">
    <location>
        <begin position="954"/>
        <end position="956"/>
    </location>
</feature>
<feature type="turn" evidence="25">
    <location>
        <begin position="957"/>
        <end position="959"/>
    </location>
</feature>
<feature type="strand" evidence="25">
    <location>
        <begin position="961"/>
        <end position="967"/>
    </location>
</feature>
<feature type="strand" evidence="25">
    <location>
        <begin position="979"/>
        <end position="987"/>
    </location>
</feature>
<feature type="helix" evidence="25">
    <location>
        <begin position="988"/>
        <end position="993"/>
    </location>
</feature>
<feature type="helix" evidence="25">
    <location>
        <begin position="998"/>
        <end position="1009"/>
    </location>
</feature>
<feature type="strand" evidence="25">
    <location>
        <begin position="1021"/>
        <end position="1030"/>
    </location>
</feature>
<feature type="strand" evidence="25">
    <location>
        <begin position="1040"/>
        <end position="1050"/>
    </location>
</feature>
<feature type="strand" evidence="25">
    <location>
        <begin position="1052"/>
        <end position="1057"/>
    </location>
</feature>
<feature type="helix" evidence="25">
    <location>
        <begin position="1060"/>
        <end position="1065"/>
    </location>
</feature>
<feature type="helix" evidence="25">
    <location>
        <begin position="1067"/>
        <end position="1072"/>
    </location>
</feature>
<feature type="strand" evidence="25">
    <location>
        <begin position="1074"/>
        <end position="1078"/>
    </location>
</feature>
<feature type="strand" evidence="25">
    <location>
        <begin position="1080"/>
        <end position="1092"/>
    </location>
</feature>
<feature type="strand" evidence="25">
    <location>
        <begin position="1106"/>
        <end position="1113"/>
    </location>
</feature>
<feature type="strand" evidence="25">
    <location>
        <begin position="1117"/>
        <end position="1119"/>
    </location>
</feature>
<feature type="helix" evidence="25">
    <location>
        <begin position="1122"/>
        <end position="1126"/>
    </location>
</feature>
<feature type="helix" evidence="26">
    <location>
        <begin position="1131"/>
        <end position="1133"/>
    </location>
</feature>
<feature type="strand" evidence="25">
    <location>
        <begin position="1135"/>
        <end position="1137"/>
    </location>
</feature>
<feature type="turn" evidence="25">
    <location>
        <begin position="1139"/>
        <end position="1141"/>
    </location>
</feature>
<feature type="strand" evidence="25">
    <location>
        <begin position="1143"/>
        <end position="1145"/>
    </location>
</feature>
<feature type="helix" evidence="25">
    <location>
        <begin position="1147"/>
        <end position="1150"/>
    </location>
</feature>
<feature type="turn" evidence="25">
    <location>
        <begin position="1151"/>
        <end position="1153"/>
    </location>
</feature>
<feature type="helix" evidence="25">
    <location>
        <begin position="1156"/>
        <end position="1171"/>
    </location>
</feature>
<feature type="helix" evidence="25">
    <location>
        <begin position="1172"/>
        <end position="1174"/>
    </location>
</feature>
<feature type="helix" evidence="25">
    <location>
        <begin position="1180"/>
        <end position="1189"/>
    </location>
</feature>
<feature type="strand" evidence="25">
    <location>
        <begin position="1192"/>
        <end position="1195"/>
    </location>
</feature>
<feature type="helix" evidence="25">
    <location>
        <begin position="1201"/>
        <end position="1211"/>
    </location>
</feature>
<feature type="helix" evidence="25">
    <location>
        <begin position="1216"/>
        <end position="1222"/>
    </location>
</feature>
<feature type="helix" evidence="25">
    <location>
        <begin position="1225"/>
        <end position="1235"/>
    </location>
</feature>
<feature type="helix" evidence="25">
    <location>
        <begin position="1245"/>
        <end position="1248"/>
    </location>
</feature>
<feature type="turn" evidence="25">
    <location>
        <begin position="1249"/>
        <end position="1251"/>
    </location>
</feature>
<feature type="strand" evidence="25">
    <location>
        <begin position="1255"/>
        <end position="1260"/>
    </location>
</feature>
<keyword id="KW-0002">3D-structure</keyword>
<keyword id="KW-0240">DNA-directed RNA polymerase</keyword>
<keyword id="KW-0460">Magnesium</keyword>
<keyword id="KW-0479">Metal-binding</keyword>
<keyword id="KW-0548">Nucleotidyltransferase</keyword>
<keyword id="KW-0539">Nucleus</keyword>
<keyword id="KW-1185">Reference proteome</keyword>
<keyword id="KW-0804">Transcription</keyword>
<keyword id="KW-0805">Transcription regulation</keyword>
<keyword id="KW-0808">Transferase</keyword>
<keyword id="KW-0862">Zinc</keyword>
<comment type="function">
    <text evidence="1 3 4 5 6 7 8 9 10 13 14 15 16 17 18 19 20">DNA-dependent RNA polymerase catalyzes the transcription of DNA into RNA using the four ribonucleoside triphosphates as substrates (By similarity). Largest and catalytic component of RNA polymerase IV which mediates 24-nt short-interfering RNAs (siRNA) accumulation. Implicated in siRNA-directed heterochromatin formation through the action of DCL3 and AGO4, and subsequent DNA methylation-dependent silencing of targeted sequences. Essential component of a self-reinforcing loop coupling de novo DNA methylation to siRNA production. Required for intercellular but not intracellular RNA interference (RNAi) leading to systemic post-transcriptional gene silencing. Involved in the maintenance of post-transcriptional RNA silencing.</text>
</comment>
<comment type="catalytic activity">
    <reaction>
        <text>RNA(n) + a ribonucleoside 5'-triphosphate = RNA(n+1) + diphosphate</text>
        <dbReference type="Rhea" id="RHEA:21248"/>
        <dbReference type="Rhea" id="RHEA-COMP:14527"/>
        <dbReference type="Rhea" id="RHEA-COMP:17342"/>
        <dbReference type="ChEBI" id="CHEBI:33019"/>
        <dbReference type="ChEBI" id="CHEBI:61557"/>
        <dbReference type="ChEBI" id="CHEBI:140395"/>
        <dbReference type="EC" id="2.7.7.6"/>
    </reaction>
</comment>
<comment type="subunit">
    <text evidence="7 10 20 21 22 23">Component of the RNA polymerase IV complex. Interacts with NRPD2, NRPD3, NRPD3B, NRPD4, NRPD5, NRPD5B, NRPD6A, NRPD7, NRPD7B, NRPD9A, NRPD9B, NRPD10, NRPD11, NRPD12, RDR2, RDM4, CLSY1, CLSY2, CLSY3, CLSY4 and SHH1.</text>
</comment>
<comment type="subcellular location">
    <subcellularLocation>
        <location evidence="7 10 11">Nucleus</location>
    </subcellularLocation>
    <text>Follows a punctate localization pattern.</text>
</comment>
<comment type="tissue specificity">
    <text evidence="7 12">Mostly expressed in flowers, and, to a lower extent, in leaves.</text>
</comment>
<comment type="disruption phenotype">
    <text evidence="3 4 5 6 7 8 9 10 14 15 16 17 18 19 20">Blocked in the perpetuation of CNN, CG and CNG methylation in repeated endogenous DNA accompanied by a reduction in long 24-26 nt siRNAs. Transient loss of post-transcriptional gene silencing (PTGS) in young leaves. Reduction of heterochromatin association into chromocenters, coincident with losses in cytosine methylation at pericentromeric 5S gene clusters and AtSN1 retroelements. Altered cell-to-cell movement of siRNAs beyond the vasculature. Release of transposon silencing. Not impaired RNA-directed DNA methylation-dependent (RdDM) silencing. Defective in the maintenance of post-transcriptional RNA silencing.</text>
</comment>
<comment type="similarity">
    <text evidence="24">Belongs to the RNA polymerase beta' chain family.</text>
</comment>
<accession>Q9LQ02</accession>
<name>NRPD1_ARATH</name>